<dbReference type="EMBL" id="CP000488">
    <property type="protein sequence ID" value="ABL02750.1"/>
    <property type="molecule type" value="Genomic_DNA"/>
</dbReference>
<dbReference type="RefSeq" id="WP_011738375.1">
    <property type="nucleotide sequence ID" value="NC_008610.1"/>
</dbReference>
<dbReference type="SMR" id="A1AXU3"/>
<dbReference type="STRING" id="413404.Rmag_1046"/>
<dbReference type="KEGG" id="rma:Rmag_1046"/>
<dbReference type="eggNOG" id="COG0224">
    <property type="taxonomic scope" value="Bacteria"/>
</dbReference>
<dbReference type="HOGENOM" id="CLU_050669_0_1_6"/>
<dbReference type="OrthoDB" id="9812769at2"/>
<dbReference type="Proteomes" id="UP000002587">
    <property type="component" value="Chromosome"/>
</dbReference>
<dbReference type="GO" id="GO:0005886">
    <property type="term" value="C:plasma membrane"/>
    <property type="evidence" value="ECO:0007669"/>
    <property type="project" value="UniProtKB-SubCell"/>
</dbReference>
<dbReference type="GO" id="GO:0045259">
    <property type="term" value="C:proton-transporting ATP synthase complex"/>
    <property type="evidence" value="ECO:0007669"/>
    <property type="project" value="UniProtKB-KW"/>
</dbReference>
<dbReference type="GO" id="GO:0005524">
    <property type="term" value="F:ATP binding"/>
    <property type="evidence" value="ECO:0007669"/>
    <property type="project" value="UniProtKB-UniRule"/>
</dbReference>
<dbReference type="GO" id="GO:0046933">
    <property type="term" value="F:proton-transporting ATP synthase activity, rotational mechanism"/>
    <property type="evidence" value="ECO:0007669"/>
    <property type="project" value="UniProtKB-UniRule"/>
</dbReference>
<dbReference type="GO" id="GO:0042777">
    <property type="term" value="P:proton motive force-driven plasma membrane ATP synthesis"/>
    <property type="evidence" value="ECO:0007669"/>
    <property type="project" value="UniProtKB-UniRule"/>
</dbReference>
<dbReference type="CDD" id="cd12151">
    <property type="entry name" value="F1-ATPase_gamma"/>
    <property type="match status" value="1"/>
</dbReference>
<dbReference type="FunFam" id="1.10.287.80:FF:000005">
    <property type="entry name" value="ATP synthase gamma chain"/>
    <property type="match status" value="1"/>
</dbReference>
<dbReference type="Gene3D" id="3.40.1380.10">
    <property type="match status" value="1"/>
</dbReference>
<dbReference type="Gene3D" id="1.10.287.80">
    <property type="entry name" value="ATP synthase, gamma subunit, helix hairpin domain"/>
    <property type="match status" value="1"/>
</dbReference>
<dbReference type="HAMAP" id="MF_00815">
    <property type="entry name" value="ATP_synth_gamma_bact"/>
    <property type="match status" value="1"/>
</dbReference>
<dbReference type="InterPro" id="IPR035968">
    <property type="entry name" value="ATP_synth_F1_ATPase_gsu"/>
</dbReference>
<dbReference type="InterPro" id="IPR000131">
    <property type="entry name" value="ATP_synth_F1_gsu"/>
</dbReference>
<dbReference type="InterPro" id="IPR023632">
    <property type="entry name" value="ATP_synth_F1_gsu_CS"/>
</dbReference>
<dbReference type="NCBIfam" id="TIGR01146">
    <property type="entry name" value="ATPsyn_F1gamma"/>
    <property type="match status" value="1"/>
</dbReference>
<dbReference type="NCBIfam" id="NF004144">
    <property type="entry name" value="PRK05621.1-1"/>
    <property type="match status" value="1"/>
</dbReference>
<dbReference type="PANTHER" id="PTHR11693">
    <property type="entry name" value="ATP SYNTHASE GAMMA CHAIN"/>
    <property type="match status" value="1"/>
</dbReference>
<dbReference type="PANTHER" id="PTHR11693:SF22">
    <property type="entry name" value="ATP SYNTHASE SUBUNIT GAMMA, MITOCHONDRIAL"/>
    <property type="match status" value="1"/>
</dbReference>
<dbReference type="Pfam" id="PF00231">
    <property type="entry name" value="ATP-synt"/>
    <property type="match status" value="1"/>
</dbReference>
<dbReference type="PRINTS" id="PR00126">
    <property type="entry name" value="ATPASEGAMMA"/>
</dbReference>
<dbReference type="SUPFAM" id="SSF52943">
    <property type="entry name" value="ATP synthase (F1-ATPase), gamma subunit"/>
    <property type="match status" value="1"/>
</dbReference>
<dbReference type="PROSITE" id="PS00153">
    <property type="entry name" value="ATPASE_GAMMA"/>
    <property type="match status" value="1"/>
</dbReference>
<name>ATPG_RUTMC</name>
<protein>
    <recommendedName>
        <fullName evidence="1">ATP synthase gamma chain</fullName>
    </recommendedName>
    <alternativeName>
        <fullName evidence="1">ATP synthase F1 sector gamma subunit</fullName>
    </alternativeName>
    <alternativeName>
        <fullName evidence="1">F-ATPase gamma subunit</fullName>
    </alternativeName>
</protein>
<accession>A1AXU3</accession>
<evidence type="ECO:0000255" key="1">
    <source>
        <dbReference type="HAMAP-Rule" id="MF_00815"/>
    </source>
</evidence>
<feature type="chain" id="PRO_1000053320" description="ATP synthase gamma chain">
    <location>
        <begin position="1"/>
        <end position="287"/>
    </location>
</feature>
<proteinExistence type="inferred from homology"/>
<organism>
    <name type="scientific">Ruthia magnifica subsp. Calyptogena magnifica</name>
    <dbReference type="NCBI Taxonomy" id="413404"/>
    <lineage>
        <taxon>Bacteria</taxon>
        <taxon>Pseudomonadati</taxon>
        <taxon>Pseudomonadota</taxon>
        <taxon>Gammaproteobacteria</taxon>
        <taxon>Candidatus Pseudothioglobaceae</taxon>
        <taxon>Candidatus Ruthturnera</taxon>
    </lineage>
</organism>
<sequence>MAAGKEIRTQISSIKNTQKITSAMEMVAASKMKKAQDRMLASRPYCEKISNVIGHLAYAHSEFEYSYMNSSEKLQRIGVIIISSDRGLCGGLNTNLFRHILKQVVEYQAKSIEVDICTIGKKATSFFKNLGLNVKSVLTDLGDTPHFDDLLGTIKVMLDEFDADEIQQLSVAYNKFENIITQTPTIMQLVPMVAGESNNINHYWDYIYEPDAQEVLSALLVRYIEALVYQGLIENIACEQSSRMIAMKSATDNASDMVKELKLIYNKARQAAITQEISEIVSGAAAV</sequence>
<gene>
    <name evidence="1" type="primary">atpG</name>
    <name type="ordered locus">Rmag_1046</name>
</gene>
<comment type="function">
    <text evidence="1">Produces ATP from ADP in the presence of a proton gradient across the membrane. The gamma chain is believed to be important in regulating ATPase activity and the flow of protons through the CF(0) complex.</text>
</comment>
<comment type="subunit">
    <text evidence="1">F-type ATPases have 2 components, CF(1) - the catalytic core - and CF(0) - the membrane proton channel. CF(1) has five subunits: alpha(3), beta(3), gamma(1), delta(1), epsilon(1). CF(0) has three main subunits: a, b and c.</text>
</comment>
<comment type="subcellular location">
    <subcellularLocation>
        <location evidence="1">Cell inner membrane</location>
        <topology evidence="1">Peripheral membrane protein</topology>
    </subcellularLocation>
</comment>
<comment type="similarity">
    <text evidence="1">Belongs to the ATPase gamma chain family.</text>
</comment>
<reference key="1">
    <citation type="journal article" date="2007" name="Science">
        <title>The Calyptogena magnifica chemoautotrophic symbiont genome.</title>
        <authorList>
            <person name="Newton I.L.G."/>
            <person name="Woyke T."/>
            <person name="Auchtung T.A."/>
            <person name="Dilly G.F."/>
            <person name="Dutton R.J."/>
            <person name="Fisher M.C."/>
            <person name="Fontanez K.M."/>
            <person name="Lau E."/>
            <person name="Stewart F.J."/>
            <person name="Richardson P.M."/>
            <person name="Barry K.W."/>
            <person name="Saunders E."/>
            <person name="Detter J.C."/>
            <person name="Wu D."/>
            <person name="Eisen J.A."/>
            <person name="Cavanaugh C.M."/>
        </authorList>
    </citation>
    <scope>NUCLEOTIDE SEQUENCE [LARGE SCALE GENOMIC DNA]</scope>
</reference>
<keyword id="KW-0066">ATP synthesis</keyword>
<keyword id="KW-0997">Cell inner membrane</keyword>
<keyword id="KW-1003">Cell membrane</keyword>
<keyword id="KW-0139">CF(1)</keyword>
<keyword id="KW-0375">Hydrogen ion transport</keyword>
<keyword id="KW-0406">Ion transport</keyword>
<keyword id="KW-0472">Membrane</keyword>
<keyword id="KW-0813">Transport</keyword>